<name>PFOR_DESAF</name>
<gene>
    <name evidence="11" type="primary">por</name>
</gene>
<keyword id="KW-0002">3D-structure</keyword>
<keyword id="KW-0004">4Fe-4S</keyword>
<keyword id="KW-0106">Calcium</keyword>
<keyword id="KW-0963">Cytoplasm</keyword>
<keyword id="KW-0903">Direct protein sequencing</keyword>
<keyword id="KW-1015">Disulfide bond</keyword>
<keyword id="KW-0249">Electron transport</keyword>
<keyword id="KW-0408">Iron</keyword>
<keyword id="KW-0411">Iron-sulfur</keyword>
<keyword id="KW-0460">Magnesium</keyword>
<keyword id="KW-0479">Metal-binding</keyword>
<keyword id="KW-0560">Oxidoreductase</keyword>
<keyword id="KW-0670">Pyruvate</keyword>
<keyword id="KW-0786">Thiamine pyrophosphate</keyword>
<keyword id="KW-0813">Transport</keyword>
<protein>
    <recommendedName>
        <fullName evidence="8">Pyruvate:ferredoxin oxidoreductase</fullName>
        <shortName>PFOR</shortName>
        <shortName evidence="9">POR</shortName>
        <ecNumber evidence="7">1.2.7.1</ecNumber>
    </recommendedName>
    <alternativeName>
        <fullName evidence="10">Pyruvate synthase</fullName>
    </alternativeName>
</protein>
<comment type="function">
    <text evidence="7">Catalyzes the ferredoxin-dependent oxidative decarboxylation of pyruvate. Required for the transfer of electrons from pyruvate to ferredoxin (PubMed:7612653, PubMed:9294422). Ferredoxin I and ferredoxin II, which are single 4Fe-4S cluster ferredoxins are the most effective electron carriers of POR (PubMed:7612653).</text>
</comment>
<comment type="catalytic activity">
    <reaction evidence="7">
        <text>2 oxidized [2Fe-2S]-[ferredoxin] + pyruvate + CoA = 2 reduced [2Fe-2S]-[ferredoxin] + acetyl-CoA + CO2 + H(+)</text>
        <dbReference type="Rhea" id="RHEA:12765"/>
        <dbReference type="Rhea" id="RHEA-COMP:10000"/>
        <dbReference type="Rhea" id="RHEA-COMP:10001"/>
        <dbReference type="ChEBI" id="CHEBI:15361"/>
        <dbReference type="ChEBI" id="CHEBI:15378"/>
        <dbReference type="ChEBI" id="CHEBI:16526"/>
        <dbReference type="ChEBI" id="CHEBI:33737"/>
        <dbReference type="ChEBI" id="CHEBI:33738"/>
        <dbReference type="ChEBI" id="CHEBI:57287"/>
        <dbReference type="ChEBI" id="CHEBI:57288"/>
        <dbReference type="EC" id="1.2.7.1"/>
    </reaction>
</comment>
<comment type="cofactor">
    <cofactor evidence="4 5 6 7">
        <name>[4Fe-4S] cluster</name>
        <dbReference type="ChEBI" id="CHEBI:49883"/>
    </cofactor>
    <text evidence="4 5 6 7">Binds 3 [4Fe-4S] clusters per subunit.</text>
</comment>
<comment type="cofactor">
    <cofactor evidence="4 5 6">
        <name>thiamine diphosphate</name>
        <dbReference type="ChEBI" id="CHEBI:58937"/>
    </cofactor>
    <text evidence="4 5 6">Binds 1 thiamine pyrophosphate per subunit.</text>
</comment>
<comment type="cofactor">
    <cofactor evidence="4 5 6">
        <name>Mg(2+)</name>
        <dbReference type="ChEBI" id="CHEBI:18420"/>
    </cofactor>
    <text evidence="4 5 6">Binds 1 Mg(2+) ion per subunit.</text>
</comment>
<comment type="subunit">
    <text evidence="4 5 6 7">Homodimer.</text>
</comment>
<comment type="subcellular location">
    <subcellularLocation>
        <location evidence="7">Cytoplasm</location>
    </subcellularLocation>
</comment>
<comment type="similarity">
    <text evidence="10">Belongs to the pyruvate:ferredoxin/flavodoxin oxidoreductase family.</text>
</comment>
<evidence type="ECO:0000250" key="1">
    <source>
        <dbReference type="UniProtKB" id="Q2RMD6"/>
    </source>
</evidence>
<evidence type="ECO:0000255" key="2">
    <source>
        <dbReference type="PROSITE-ProRule" id="PRU00711"/>
    </source>
</evidence>
<evidence type="ECO:0000256" key="3">
    <source>
        <dbReference type="SAM" id="MobiDB-lite"/>
    </source>
</evidence>
<evidence type="ECO:0000269" key="4">
    <source>
    </source>
</evidence>
<evidence type="ECO:0000269" key="5">
    <source>
    </source>
</evidence>
<evidence type="ECO:0000269" key="6">
    <source>
    </source>
</evidence>
<evidence type="ECO:0000269" key="7">
    <source>
    </source>
</evidence>
<evidence type="ECO:0000303" key="8">
    <source>
    </source>
</evidence>
<evidence type="ECO:0000303" key="9">
    <source>
    </source>
</evidence>
<evidence type="ECO:0000305" key="10"/>
<evidence type="ECO:0000312" key="11">
    <source>
        <dbReference type="EMBL" id="CAA70873.1"/>
    </source>
</evidence>
<evidence type="ECO:0007829" key="12">
    <source>
        <dbReference type="PDB" id="1B0P"/>
    </source>
</evidence>
<evidence type="ECO:0007829" key="13">
    <source>
        <dbReference type="PDB" id="1KEK"/>
    </source>
</evidence>
<evidence type="ECO:0007829" key="14">
    <source>
        <dbReference type="PDB" id="2C3M"/>
    </source>
</evidence>
<evidence type="ECO:0007829" key="15">
    <source>
        <dbReference type="PDB" id="2C3U"/>
    </source>
</evidence>
<evidence type="ECO:0007829" key="16">
    <source>
        <dbReference type="PDB" id="2C42"/>
    </source>
</evidence>
<evidence type="ECO:0007829" key="17">
    <source>
        <dbReference type="PDB" id="7PLM"/>
    </source>
</evidence>
<dbReference type="EC" id="1.2.7.1" evidence="7"/>
<dbReference type="EMBL" id="Y09702">
    <property type="protein sequence ID" value="CAA70873.1"/>
    <property type="molecule type" value="Genomic_DNA"/>
</dbReference>
<dbReference type="PDB" id="1B0P">
    <property type="method" value="X-ray"/>
    <property type="resolution" value="2.31 A"/>
    <property type="chains" value="A/B=2-1232"/>
</dbReference>
<dbReference type="PDB" id="1KEK">
    <property type="method" value="X-ray"/>
    <property type="resolution" value="1.90 A"/>
    <property type="chains" value="A/B=2-1232"/>
</dbReference>
<dbReference type="PDB" id="2C3M">
    <property type="method" value="X-ray"/>
    <property type="resolution" value="1.84 A"/>
    <property type="chains" value="A/B=2-1232"/>
</dbReference>
<dbReference type="PDB" id="2C3O">
    <property type="method" value="X-ray"/>
    <property type="resolution" value="2.70 A"/>
    <property type="chains" value="A/B=2-1232"/>
</dbReference>
<dbReference type="PDB" id="2C3P">
    <property type="method" value="X-ray"/>
    <property type="resolution" value="2.33 A"/>
    <property type="chains" value="A/B=2-1232"/>
</dbReference>
<dbReference type="PDB" id="2C3U">
    <property type="method" value="X-ray"/>
    <property type="resolution" value="2.32 A"/>
    <property type="chains" value="A/B=2-1232"/>
</dbReference>
<dbReference type="PDB" id="2C3Y">
    <property type="method" value="X-ray"/>
    <property type="resolution" value="1.93 A"/>
    <property type="chains" value="A/B=2-1232"/>
</dbReference>
<dbReference type="PDB" id="2C42">
    <property type="method" value="X-ray"/>
    <property type="resolution" value="1.78 A"/>
    <property type="chains" value="A/B=2-1232"/>
</dbReference>
<dbReference type="PDB" id="2PDA">
    <property type="method" value="X-ray"/>
    <property type="resolution" value="3.00 A"/>
    <property type="chains" value="A/B=2-1232"/>
</dbReference>
<dbReference type="PDB" id="2UZA">
    <property type="method" value="X-ray"/>
    <property type="resolution" value="2.42 A"/>
    <property type="chains" value="A/B=2-1232"/>
</dbReference>
<dbReference type="PDB" id="7PLM">
    <property type="method" value="EM"/>
    <property type="resolution" value="2.90 A"/>
    <property type="chains" value="A/B=1-1232"/>
</dbReference>
<dbReference type="PDBsum" id="1B0P"/>
<dbReference type="PDBsum" id="1KEK"/>
<dbReference type="PDBsum" id="2C3M"/>
<dbReference type="PDBsum" id="2C3O"/>
<dbReference type="PDBsum" id="2C3P"/>
<dbReference type="PDBsum" id="2C3U"/>
<dbReference type="PDBsum" id="2C3Y"/>
<dbReference type="PDBsum" id="2C42"/>
<dbReference type="PDBsum" id="2PDA"/>
<dbReference type="PDBsum" id="2UZA"/>
<dbReference type="PDBsum" id="7PLM"/>
<dbReference type="EMDB" id="EMD-13493"/>
<dbReference type="SMR" id="P94692"/>
<dbReference type="DIP" id="DIP-29036N"/>
<dbReference type="DrugBank" id="DB02410">
    <property type="generic name" value="2-Acetyl-3-[(4-Amino-2-Methyl-5-Pyrimidinyl)Methyl]-4-Methyl-5-(4,6,6-Trihydroxy-3,5-Dioxa-4,6-Diphosphahex-1-Yl)Thiazolium Inner Salt P,P'-Dioxide"/>
</dbReference>
<dbReference type="DrugBank" id="DB01987">
    <property type="generic name" value="Cocarboxylase"/>
</dbReference>
<dbReference type="DrugBank" id="DB00507">
    <property type="generic name" value="Nitazoxanide"/>
</dbReference>
<dbReference type="EvolutionaryTrace" id="P94692"/>
<dbReference type="GO" id="GO:0005737">
    <property type="term" value="C:cytoplasm"/>
    <property type="evidence" value="ECO:0007669"/>
    <property type="project" value="UniProtKB-SubCell"/>
</dbReference>
<dbReference type="GO" id="GO:0051539">
    <property type="term" value="F:4 iron, 4 sulfur cluster binding"/>
    <property type="evidence" value="ECO:0007669"/>
    <property type="project" value="UniProtKB-KW"/>
</dbReference>
<dbReference type="GO" id="GO:0005506">
    <property type="term" value="F:iron ion binding"/>
    <property type="evidence" value="ECO:0007669"/>
    <property type="project" value="InterPro"/>
</dbReference>
<dbReference type="GO" id="GO:0019164">
    <property type="term" value="F:pyruvate synthase activity"/>
    <property type="evidence" value="ECO:0007669"/>
    <property type="project" value="UniProtKB-EC"/>
</dbReference>
<dbReference type="GO" id="GO:0030976">
    <property type="term" value="F:thiamine pyrophosphate binding"/>
    <property type="evidence" value="ECO:0007669"/>
    <property type="project" value="InterPro"/>
</dbReference>
<dbReference type="GO" id="GO:0022900">
    <property type="term" value="P:electron transport chain"/>
    <property type="evidence" value="ECO:0007669"/>
    <property type="project" value="InterPro"/>
</dbReference>
<dbReference type="GO" id="GO:0006979">
    <property type="term" value="P:response to oxidative stress"/>
    <property type="evidence" value="ECO:0007669"/>
    <property type="project" value="TreeGrafter"/>
</dbReference>
<dbReference type="CDD" id="cd03377">
    <property type="entry name" value="TPP_PFOR_PNO"/>
    <property type="match status" value="1"/>
</dbReference>
<dbReference type="CDD" id="cd07034">
    <property type="entry name" value="TPP_PYR_PFOR_IOR-alpha_like"/>
    <property type="match status" value="1"/>
</dbReference>
<dbReference type="FunFam" id="3.30.70.20:FF:000022">
    <property type="entry name" value="Pyruvate:ferredoxin (Flavodoxin) oxidoreductase"/>
    <property type="match status" value="1"/>
</dbReference>
<dbReference type="FunFam" id="3.40.50.920:FF:000007">
    <property type="entry name" value="Pyruvate:ferredoxin (Flavodoxin) oxidoreductase"/>
    <property type="match status" value="1"/>
</dbReference>
<dbReference type="FunFam" id="3.40.50.970:FF:000012">
    <property type="entry name" value="Pyruvate:ferredoxin (Flavodoxin) oxidoreductase"/>
    <property type="match status" value="1"/>
</dbReference>
<dbReference type="FunFam" id="3.40.50.970:FF:000041">
    <property type="entry name" value="Pyruvate:ferredoxin (Flavodoxin) oxidoreductase"/>
    <property type="match status" value="1"/>
</dbReference>
<dbReference type="FunFam" id="3.40.920.10:FF:000001">
    <property type="entry name" value="Pyruvate:ferredoxin (Flavodoxin) oxidoreductase"/>
    <property type="match status" value="1"/>
</dbReference>
<dbReference type="Gene3D" id="3.30.70.20">
    <property type="match status" value="1"/>
</dbReference>
<dbReference type="Gene3D" id="3.40.50.920">
    <property type="match status" value="1"/>
</dbReference>
<dbReference type="Gene3D" id="3.40.50.970">
    <property type="match status" value="2"/>
</dbReference>
<dbReference type="Gene3D" id="4.10.790.10">
    <property type="entry name" value="Pyruvate-ferredoxin Oxidoreductase, domain 7"/>
    <property type="match status" value="1"/>
</dbReference>
<dbReference type="Gene3D" id="3.40.920.10">
    <property type="entry name" value="Pyruvate-ferredoxin oxidoreductase, PFOR, domain III"/>
    <property type="match status" value="1"/>
</dbReference>
<dbReference type="Gene3D" id="4.10.780.10">
    <property type="entry name" value="Pyruvate-flavodoxin oxidoreductase, EKR domain"/>
    <property type="match status" value="1"/>
</dbReference>
<dbReference type="InterPro" id="IPR017896">
    <property type="entry name" value="4Fe4S_Fe-S-bd"/>
</dbReference>
<dbReference type="InterPro" id="IPR017900">
    <property type="entry name" value="4Fe4S_Fe_S_CS"/>
</dbReference>
<dbReference type="InterPro" id="IPR033412">
    <property type="entry name" value="PFOR_II"/>
</dbReference>
<dbReference type="InterPro" id="IPR055168">
    <property type="entry name" value="Pyruv_OxRed_insertion"/>
</dbReference>
<dbReference type="InterPro" id="IPR050722">
    <property type="entry name" value="Pyruvate:ferred/Flavod_OxRd"/>
</dbReference>
<dbReference type="InterPro" id="IPR037112">
    <property type="entry name" value="Pyrv-flavodox_OxR_EKR_sf"/>
</dbReference>
<dbReference type="InterPro" id="IPR019456">
    <property type="entry name" value="Pyrv-flavodox_OxRtase_EKR"/>
</dbReference>
<dbReference type="InterPro" id="IPR019752">
    <property type="entry name" value="Pyrv/ketoisovalerate_OxRed_cat"/>
</dbReference>
<dbReference type="InterPro" id="IPR002880">
    <property type="entry name" value="Pyrv_Fd/Flavodoxin_OxRdtase_N"/>
</dbReference>
<dbReference type="InterPro" id="IPR011895">
    <property type="entry name" value="Pyrv_flavodox_OxRed"/>
</dbReference>
<dbReference type="InterPro" id="IPR002869">
    <property type="entry name" value="Pyrv_flavodox_OxRed_cen"/>
</dbReference>
<dbReference type="InterPro" id="IPR029061">
    <property type="entry name" value="THDP-binding"/>
</dbReference>
<dbReference type="InterPro" id="IPR011766">
    <property type="entry name" value="TPP_enzyme_TPP-bd"/>
</dbReference>
<dbReference type="InterPro" id="IPR009014">
    <property type="entry name" value="Transketo_C/PFOR_II"/>
</dbReference>
<dbReference type="NCBIfam" id="TIGR02176">
    <property type="entry name" value="pyruv_ox_red"/>
    <property type="match status" value="1"/>
</dbReference>
<dbReference type="PANTHER" id="PTHR32154">
    <property type="entry name" value="PYRUVATE-FLAVODOXIN OXIDOREDUCTASE-RELATED"/>
    <property type="match status" value="1"/>
</dbReference>
<dbReference type="PANTHER" id="PTHR32154:SF0">
    <property type="entry name" value="PYRUVATE-FLAVODOXIN OXIDOREDUCTASE-RELATED"/>
    <property type="match status" value="1"/>
</dbReference>
<dbReference type="Pfam" id="PF10371">
    <property type="entry name" value="EKR"/>
    <property type="match status" value="1"/>
</dbReference>
<dbReference type="Pfam" id="PF12838">
    <property type="entry name" value="Fer4_7"/>
    <property type="match status" value="1"/>
</dbReference>
<dbReference type="Pfam" id="PF17147">
    <property type="entry name" value="PFOR_II"/>
    <property type="match status" value="1"/>
</dbReference>
<dbReference type="Pfam" id="PF01558">
    <property type="entry name" value="POR"/>
    <property type="match status" value="1"/>
</dbReference>
<dbReference type="Pfam" id="PF01855">
    <property type="entry name" value="POR_N"/>
    <property type="match status" value="1"/>
</dbReference>
<dbReference type="Pfam" id="PF22338">
    <property type="entry name" value="Pyruv_OxRed_insertion"/>
    <property type="match status" value="1"/>
</dbReference>
<dbReference type="Pfam" id="PF02775">
    <property type="entry name" value="TPP_enzyme_C"/>
    <property type="match status" value="1"/>
</dbReference>
<dbReference type="PIRSF" id="PIRSF000159">
    <property type="entry name" value="NifJ"/>
    <property type="match status" value="1"/>
</dbReference>
<dbReference type="SMART" id="SM00890">
    <property type="entry name" value="EKR"/>
    <property type="match status" value="1"/>
</dbReference>
<dbReference type="SUPFAM" id="SSF54862">
    <property type="entry name" value="4Fe-4S ferredoxins"/>
    <property type="match status" value="1"/>
</dbReference>
<dbReference type="SUPFAM" id="SSF53323">
    <property type="entry name" value="Pyruvate-ferredoxin oxidoreductase, PFOR, domain III"/>
    <property type="match status" value="1"/>
</dbReference>
<dbReference type="SUPFAM" id="SSF52518">
    <property type="entry name" value="Thiamin diphosphate-binding fold (THDP-binding)"/>
    <property type="match status" value="2"/>
</dbReference>
<dbReference type="SUPFAM" id="SSF52922">
    <property type="entry name" value="TK C-terminal domain-like"/>
    <property type="match status" value="1"/>
</dbReference>
<dbReference type="PROSITE" id="PS00198">
    <property type="entry name" value="4FE4S_FER_1"/>
    <property type="match status" value="2"/>
</dbReference>
<dbReference type="PROSITE" id="PS51379">
    <property type="entry name" value="4FE4S_FER_2"/>
    <property type="match status" value="2"/>
</dbReference>
<accession>P94692</accession>
<feature type="chain" id="PRO_0000430800" description="Pyruvate:ferredoxin oxidoreductase">
    <location>
        <begin position="1"/>
        <end position="1232"/>
    </location>
</feature>
<feature type="domain" description="4Fe-4S ferredoxin-type 1" evidence="2">
    <location>
        <begin position="680"/>
        <end position="709"/>
    </location>
</feature>
<feature type="domain" description="4Fe-4S ferredoxin-type 2" evidence="2">
    <location>
        <begin position="736"/>
        <end position="767"/>
    </location>
</feature>
<feature type="region of interest" description="Disordered" evidence="3">
    <location>
        <begin position="1197"/>
        <end position="1232"/>
    </location>
</feature>
<feature type="compositionally biased region" description="Polar residues" evidence="3">
    <location>
        <begin position="1216"/>
        <end position="1225"/>
    </location>
</feature>
<feature type="binding site" evidence="4 6">
    <location>
        <position position="31"/>
    </location>
    <ligand>
        <name>pyruvate</name>
        <dbReference type="ChEBI" id="CHEBI:15361"/>
    </ligand>
</feature>
<feature type="binding site" evidence="4 5">
    <location>
        <position position="64"/>
    </location>
    <ligand>
        <name>thiamine diphosphate</name>
        <dbReference type="ChEBI" id="CHEBI:58937"/>
    </ligand>
</feature>
<feature type="binding site" evidence="4 6">
    <location>
        <position position="114"/>
    </location>
    <ligand>
        <name>pyruvate</name>
        <dbReference type="ChEBI" id="CHEBI:15361"/>
    </ligand>
</feature>
<feature type="binding site" evidence="1">
    <location>
        <begin position="427"/>
        <end position="431"/>
    </location>
    <ligand>
        <name>CoA</name>
        <dbReference type="ChEBI" id="CHEBI:57287"/>
    </ligand>
</feature>
<feature type="binding site" evidence="1">
    <location>
        <position position="459"/>
    </location>
    <ligand>
        <name>CoA</name>
        <dbReference type="ChEBI" id="CHEBI:57287"/>
    </ligand>
</feature>
<feature type="binding site" evidence="1">
    <location>
        <position position="560"/>
    </location>
    <ligand>
        <name>CoA</name>
        <dbReference type="ChEBI" id="CHEBI:57287"/>
    </ligand>
</feature>
<feature type="binding site" evidence="1">
    <location>
        <position position="602"/>
    </location>
    <ligand>
        <name>CoA</name>
        <dbReference type="ChEBI" id="CHEBI:57287"/>
    </ligand>
</feature>
<feature type="binding site" evidence="4 5 6">
    <location>
        <position position="689"/>
    </location>
    <ligand>
        <name>[4Fe-4S] cluster</name>
        <dbReference type="ChEBI" id="CHEBI:49883"/>
        <label>1</label>
    </ligand>
</feature>
<feature type="binding site" evidence="4 5 6">
    <location>
        <position position="692"/>
    </location>
    <ligand>
        <name>[4Fe-4S] cluster</name>
        <dbReference type="ChEBI" id="CHEBI:49883"/>
        <label>1</label>
    </ligand>
</feature>
<feature type="binding site" evidence="4 5 6">
    <location>
        <position position="695"/>
    </location>
    <ligand>
        <name>[4Fe-4S] cluster</name>
        <dbReference type="ChEBI" id="CHEBI:49883"/>
        <label>1</label>
    </ligand>
</feature>
<feature type="binding site" evidence="4 5 6">
    <location>
        <position position="699"/>
    </location>
    <ligand>
        <name>[4Fe-4S] cluster</name>
        <dbReference type="ChEBI" id="CHEBI:49883"/>
        <label>2</label>
    </ligand>
</feature>
<feature type="binding site" evidence="4 5 6">
    <location>
        <position position="745"/>
    </location>
    <ligand>
        <name>[4Fe-4S] cluster</name>
        <dbReference type="ChEBI" id="CHEBI:49883"/>
        <label>2</label>
    </ligand>
</feature>
<feature type="binding site" evidence="4 5 6">
    <location>
        <position position="748"/>
    </location>
    <ligand>
        <name>[4Fe-4S] cluster</name>
        <dbReference type="ChEBI" id="CHEBI:49883"/>
        <label>2</label>
    </ligand>
</feature>
<feature type="binding site" evidence="4 5 6">
    <location>
        <position position="751"/>
    </location>
    <ligand>
        <name>[4Fe-4S] cluster</name>
        <dbReference type="ChEBI" id="CHEBI:49883"/>
        <label>2</label>
    </ligand>
</feature>
<feature type="binding site" evidence="4 5 6">
    <location>
        <position position="755"/>
    </location>
    <ligand>
        <name>[4Fe-4S] cluster</name>
        <dbReference type="ChEBI" id="CHEBI:49883"/>
        <label>1</label>
    </ligand>
</feature>
<feature type="binding site" evidence="4 5 6">
    <location>
        <position position="812"/>
    </location>
    <ligand>
        <name>[4Fe-4S] cluster</name>
        <dbReference type="ChEBI" id="CHEBI:49883"/>
        <label>3</label>
    </ligand>
</feature>
<feature type="binding site" evidence="4 5 6">
    <location>
        <position position="815"/>
    </location>
    <ligand>
        <name>[4Fe-4S] cluster</name>
        <dbReference type="ChEBI" id="CHEBI:49883"/>
        <label>3</label>
    </ligand>
</feature>
<feature type="binding site" evidence="4 5 6">
    <location>
        <position position="817"/>
    </location>
    <ligand>
        <name>thiamine diphosphate</name>
        <dbReference type="ChEBI" id="CHEBI:58937"/>
    </ligand>
</feature>
<feature type="binding site" evidence="4 5 6">
    <location>
        <position position="840"/>
    </location>
    <ligand>
        <name>[4Fe-4S] cluster</name>
        <dbReference type="ChEBI" id="CHEBI:49883"/>
        <label>3</label>
    </ligand>
</feature>
<feature type="binding site" evidence="4 5 6">
    <location>
        <position position="840"/>
    </location>
    <ligand>
        <name>thiamine diphosphate</name>
        <dbReference type="ChEBI" id="CHEBI:58937"/>
    </ligand>
</feature>
<feature type="binding site" evidence="4 5 6">
    <location>
        <begin position="962"/>
        <end position="965"/>
    </location>
    <ligand>
        <name>thiamine diphosphate</name>
        <dbReference type="ChEBI" id="CHEBI:58937"/>
    </ligand>
</feature>
<feature type="binding site" evidence="4 5 6">
    <location>
        <position position="963"/>
    </location>
    <ligand>
        <name>Mg(2+)</name>
        <dbReference type="ChEBI" id="CHEBI:18420"/>
    </ligand>
</feature>
<feature type="binding site" evidence="4 5 6">
    <location>
        <position position="983"/>
    </location>
    <ligand>
        <name>Ca(2+)</name>
        <dbReference type="ChEBI" id="CHEBI:29108"/>
    </ligand>
</feature>
<feature type="binding site" evidence="4 5 6">
    <location>
        <position position="985"/>
    </location>
    <ligand>
        <name>Ca(2+)</name>
        <dbReference type="ChEBI" id="CHEBI:29108"/>
    </ligand>
</feature>
<feature type="binding site" evidence="4 5 6">
    <location>
        <begin position="991"/>
        <end position="996"/>
    </location>
    <ligand>
        <name>thiamine diphosphate</name>
        <dbReference type="ChEBI" id="CHEBI:58937"/>
    </ligand>
</feature>
<feature type="binding site" evidence="4 5 6">
    <location>
        <position position="991"/>
    </location>
    <ligand>
        <name>Mg(2+)</name>
        <dbReference type="ChEBI" id="CHEBI:18420"/>
    </ligand>
</feature>
<feature type="binding site" evidence="4 5 6">
    <location>
        <position position="993"/>
    </location>
    <ligand>
        <name>Mg(2+)</name>
        <dbReference type="ChEBI" id="CHEBI:18420"/>
    </ligand>
</feature>
<feature type="binding site" evidence="4 5 6">
    <location>
        <position position="1056"/>
    </location>
    <ligand>
        <name>Ca(2+)</name>
        <dbReference type="ChEBI" id="CHEBI:29108"/>
    </ligand>
</feature>
<feature type="binding site" evidence="4 5 6">
    <location>
        <position position="1059"/>
    </location>
    <ligand>
        <name>Ca(2+)</name>
        <dbReference type="ChEBI" id="CHEBI:29108"/>
    </ligand>
</feature>
<feature type="binding site" evidence="4 5 6">
    <location>
        <position position="1061"/>
    </location>
    <ligand>
        <name>Ca(2+)</name>
        <dbReference type="ChEBI" id="CHEBI:29108"/>
    </ligand>
</feature>
<feature type="binding site" evidence="4 5 6">
    <location>
        <position position="1063"/>
    </location>
    <ligand>
        <name>Ca(2+)</name>
        <dbReference type="ChEBI" id="CHEBI:29108"/>
    </ligand>
</feature>
<feature type="binding site" evidence="4 5">
    <location>
        <position position="1071"/>
    </location>
    <ligand>
        <name>[4Fe-4S] cluster</name>
        <dbReference type="ChEBI" id="CHEBI:49883"/>
        <label>3</label>
    </ligand>
</feature>
<feature type="site" description="Important for catalytic activity" evidence="8">
    <location>
        <position position="31"/>
    </location>
</feature>
<feature type="site" description="Important for catalytic activity" evidence="8">
    <location>
        <position position="64"/>
    </location>
</feature>
<feature type="site" description="Important for catalytic activity" evidence="8">
    <location>
        <position position="114"/>
    </location>
</feature>
<feature type="site" description="Important for catalytic activity" evidence="8">
    <location>
        <position position="996"/>
    </location>
</feature>
<feature type="disulfide bond">
    <location>
        <begin position="1195"/>
        <end position="1212"/>
    </location>
</feature>
<feature type="strand" evidence="16">
    <location>
        <begin position="5"/>
        <end position="9"/>
    </location>
</feature>
<feature type="helix" evidence="16">
    <location>
        <begin position="10"/>
        <end position="21"/>
    </location>
</feature>
<feature type="strand" evidence="16">
    <location>
        <begin position="23"/>
        <end position="27"/>
    </location>
</feature>
<feature type="turn" evidence="16">
    <location>
        <begin position="31"/>
        <end position="33"/>
    </location>
</feature>
<feature type="helix" evidence="16">
    <location>
        <begin position="34"/>
        <end position="46"/>
    </location>
</feature>
<feature type="strand" evidence="16">
    <location>
        <begin position="57"/>
        <end position="60"/>
    </location>
</feature>
<feature type="helix" evidence="16">
    <location>
        <begin position="64"/>
        <end position="76"/>
    </location>
</feature>
<feature type="strand" evidence="16">
    <location>
        <begin position="81"/>
        <end position="85"/>
    </location>
</feature>
<feature type="helix" evidence="16">
    <location>
        <begin position="87"/>
        <end position="102"/>
    </location>
</feature>
<feature type="strand" evidence="16">
    <location>
        <begin position="108"/>
        <end position="113"/>
    </location>
</feature>
<feature type="strand" evidence="16">
    <location>
        <begin position="118"/>
        <end position="121"/>
    </location>
</feature>
<feature type="helix" evidence="16">
    <location>
        <begin position="128"/>
        <end position="131"/>
    </location>
</feature>
<feature type="turn" evidence="16">
    <location>
        <begin position="132"/>
        <end position="135"/>
    </location>
</feature>
<feature type="strand" evidence="16">
    <location>
        <begin position="139"/>
        <end position="142"/>
    </location>
</feature>
<feature type="helix" evidence="16">
    <location>
        <begin position="146"/>
        <end position="163"/>
    </location>
</feature>
<feature type="strand" evidence="16">
    <location>
        <begin position="167"/>
        <end position="172"/>
    </location>
</feature>
<feature type="turn" evidence="16">
    <location>
        <begin position="173"/>
        <end position="178"/>
    </location>
</feature>
<feature type="strand" evidence="16">
    <location>
        <begin position="180"/>
        <end position="184"/>
    </location>
</feature>
<feature type="helix" evidence="16">
    <location>
        <begin position="188"/>
        <end position="193"/>
    </location>
</feature>
<feature type="helix" evidence="16">
    <location>
        <begin position="197"/>
        <end position="206"/>
    </location>
</feature>
<feature type="strand" evidence="16">
    <location>
        <begin position="215"/>
        <end position="217"/>
    </location>
</feature>
<feature type="turn" evidence="16">
    <location>
        <begin position="222"/>
        <end position="224"/>
    </location>
</feature>
<feature type="helix" evidence="16">
    <location>
        <begin position="225"/>
        <end position="230"/>
    </location>
</feature>
<feature type="helix" evidence="16">
    <location>
        <begin position="233"/>
        <end position="254"/>
    </location>
</feature>
<feature type="strand" evidence="16">
    <location>
        <begin position="260"/>
        <end position="265"/>
    </location>
</feature>
<feature type="strand" evidence="16">
    <location>
        <begin position="270"/>
        <end position="275"/>
    </location>
</feature>
<feature type="helix" evidence="16">
    <location>
        <begin position="279"/>
        <end position="291"/>
    </location>
</feature>
<feature type="turn" evidence="16">
    <location>
        <begin position="292"/>
        <end position="294"/>
    </location>
</feature>
<feature type="strand" evidence="16">
    <location>
        <begin position="297"/>
        <end position="307"/>
    </location>
</feature>
<feature type="helix" evidence="16">
    <location>
        <begin position="310"/>
        <end position="315"/>
    </location>
</feature>
<feature type="strand" evidence="16">
    <location>
        <begin position="323"/>
        <end position="330"/>
    </location>
</feature>
<feature type="strand" evidence="12">
    <location>
        <begin position="335"/>
        <end position="337"/>
    </location>
</feature>
<feature type="helix" evidence="16">
    <location>
        <begin position="339"/>
        <end position="351"/>
    </location>
</feature>
<feature type="strand" evidence="16">
    <location>
        <begin position="357"/>
        <end position="362"/>
    </location>
</feature>
<feature type="helix" evidence="16">
    <location>
        <begin position="365"/>
        <end position="367"/>
    </location>
</feature>
<feature type="helix" evidence="16">
    <location>
        <begin position="372"/>
        <end position="383"/>
    </location>
</feature>
<feature type="strand" evidence="16">
    <location>
        <begin position="388"/>
        <end position="391"/>
    </location>
</feature>
<feature type="turn" evidence="16">
    <location>
        <begin position="397"/>
        <end position="399"/>
    </location>
</feature>
<feature type="strand" evidence="16">
    <location>
        <begin position="418"/>
        <end position="425"/>
    </location>
</feature>
<feature type="helix" evidence="16">
    <location>
        <begin position="430"/>
        <end position="444"/>
    </location>
</feature>
<feature type="strand" evidence="16">
    <location>
        <begin position="448"/>
        <end position="454"/>
    </location>
</feature>
<feature type="strand" evidence="16">
    <location>
        <begin position="457"/>
        <end position="461"/>
    </location>
</feature>
<feature type="strand" evidence="16">
    <location>
        <begin position="463"/>
        <end position="473"/>
    </location>
</feature>
<feature type="strand" evidence="16">
    <location>
        <begin position="485"/>
        <end position="490"/>
    </location>
</feature>
<feature type="helix" evidence="16">
    <location>
        <begin position="492"/>
        <end position="496"/>
    </location>
</feature>
<feature type="turn" evidence="16">
    <location>
        <begin position="500"/>
        <end position="503"/>
    </location>
</feature>
<feature type="strand" evidence="16">
    <location>
        <begin position="509"/>
        <end position="513"/>
    </location>
</feature>
<feature type="helix" evidence="16">
    <location>
        <begin position="519"/>
        <end position="525"/>
    </location>
</feature>
<feature type="helix" evidence="16">
    <location>
        <begin position="528"/>
        <end position="536"/>
    </location>
</feature>
<feature type="strand" evidence="16">
    <location>
        <begin position="540"/>
        <end position="544"/>
    </location>
</feature>
<feature type="helix" evidence="16">
    <location>
        <begin position="546"/>
        <end position="552"/>
    </location>
</feature>
<feature type="helix" evidence="16">
    <location>
        <begin position="560"/>
        <end position="570"/>
    </location>
</feature>
<feature type="strand" evidence="13">
    <location>
        <begin position="571"/>
        <end position="574"/>
    </location>
</feature>
<feature type="helix" evidence="16">
    <location>
        <begin position="576"/>
        <end position="589"/>
    </location>
</feature>
<feature type="helix" evidence="16">
    <location>
        <begin position="595"/>
        <end position="612"/>
    </location>
</feature>
<feature type="helix" evidence="16">
    <location>
        <begin position="620"/>
        <end position="624"/>
    </location>
</feature>
<feature type="helix" evidence="16">
    <location>
        <begin position="637"/>
        <end position="641"/>
    </location>
</feature>
<feature type="helix" evidence="16">
    <location>
        <begin position="643"/>
        <end position="647"/>
    </location>
</feature>
<feature type="helix" evidence="16">
    <location>
        <begin position="651"/>
        <end position="653"/>
    </location>
</feature>
<feature type="helix" evidence="16">
    <location>
        <begin position="656"/>
        <end position="658"/>
    </location>
</feature>
<feature type="helix" evidence="16">
    <location>
        <begin position="669"/>
        <end position="672"/>
    </location>
</feature>
<feature type="strand" evidence="16">
    <location>
        <begin position="679"/>
        <end position="684"/>
    </location>
</feature>
<feature type="turn" evidence="16">
    <location>
        <begin position="686"/>
        <end position="688"/>
    </location>
</feature>
<feature type="helix" evidence="16">
    <location>
        <begin position="694"/>
        <end position="698"/>
    </location>
</feature>
<feature type="strand" evidence="16">
    <location>
        <begin position="704"/>
        <end position="709"/>
    </location>
</feature>
<feature type="helix" evidence="16">
    <location>
        <begin position="711"/>
        <end position="714"/>
    </location>
</feature>
<feature type="helix" evidence="16">
    <location>
        <begin position="729"/>
        <end position="731"/>
    </location>
</feature>
<feature type="strand" evidence="16">
    <location>
        <begin position="735"/>
        <end position="740"/>
    </location>
</feature>
<feature type="turn" evidence="16">
    <location>
        <begin position="742"/>
        <end position="744"/>
    </location>
</feature>
<feature type="helix" evidence="16">
    <location>
        <begin position="750"/>
        <end position="754"/>
    </location>
</feature>
<feature type="strand" evidence="16">
    <location>
        <begin position="756"/>
        <end position="759"/>
    </location>
</feature>
<feature type="strand" evidence="16">
    <location>
        <begin position="761"/>
        <end position="766"/>
    </location>
</feature>
<feature type="helix" evidence="16">
    <location>
        <begin position="767"/>
        <end position="769"/>
    </location>
</feature>
<feature type="helix" evidence="16">
    <location>
        <begin position="771"/>
        <end position="782"/>
    </location>
</feature>
<feature type="strand" evidence="14">
    <location>
        <begin position="789"/>
        <end position="791"/>
    </location>
</feature>
<feature type="strand" evidence="17">
    <location>
        <begin position="793"/>
        <end position="795"/>
    </location>
</feature>
<feature type="helix" evidence="16">
    <location>
        <begin position="796"/>
        <end position="799"/>
    </location>
</feature>
<feature type="helix" evidence="16">
    <location>
        <begin position="818"/>
        <end position="828"/>
    </location>
</feature>
<feature type="helix" evidence="16">
    <location>
        <begin position="829"/>
        <end position="831"/>
    </location>
</feature>
<feature type="strand" evidence="16">
    <location>
        <begin position="832"/>
        <end position="836"/>
    </location>
</feature>
<feature type="helix" evidence="16">
    <location>
        <begin position="840"/>
        <end position="846"/>
    </location>
</feature>
<feature type="strand" evidence="16">
    <location>
        <begin position="863"/>
        <end position="865"/>
    </location>
</feature>
<feature type="helix" evidence="16">
    <location>
        <begin position="872"/>
        <end position="898"/>
    </location>
</feature>
<feature type="turn" evidence="16">
    <location>
        <begin position="899"/>
        <end position="901"/>
    </location>
</feature>
<feature type="helix" evidence="16">
    <location>
        <begin position="904"/>
        <end position="916"/>
    </location>
</feature>
<feature type="helix" evidence="16">
    <location>
        <begin position="920"/>
        <end position="933"/>
    </location>
</feature>
<feature type="turn" evidence="16">
    <location>
        <begin position="934"/>
        <end position="936"/>
    </location>
</feature>
<feature type="helix" evidence="16">
    <location>
        <begin position="940"/>
        <end position="946"/>
    </location>
</feature>
<feature type="helix" evidence="16">
    <location>
        <begin position="947"/>
        <end position="951"/>
    </location>
</feature>
<feature type="strand" evidence="16">
    <location>
        <begin position="956"/>
        <end position="962"/>
    </location>
</feature>
<feature type="helix" evidence="16">
    <location>
        <begin position="963"/>
        <end position="967"/>
    </location>
</feature>
<feature type="turn" evidence="16">
    <location>
        <begin position="968"/>
        <end position="970"/>
    </location>
</feature>
<feature type="helix" evidence="16">
    <location>
        <begin position="971"/>
        <end position="979"/>
    </location>
</feature>
<feature type="strand" evidence="16">
    <location>
        <begin position="985"/>
        <end position="990"/>
    </location>
</feature>
<feature type="strand" evidence="16">
    <location>
        <begin position="992"/>
        <end position="994"/>
    </location>
</feature>
<feature type="turn" evidence="16">
    <location>
        <begin position="995"/>
        <end position="998"/>
    </location>
</feature>
<feature type="strand" evidence="17">
    <location>
        <begin position="1003"/>
        <end position="1005"/>
    </location>
</feature>
<feature type="helix" evidence="16">
    <location>
        <begin position="1025"/>
        <end position="1030"/>
    </location>
</feature>
<feature type="strand" evidence="16">
    <location>
        <begin position="1033"/>
        <end position="1040"/>
    </location>
</feature>
<feature type="turn" evidence="16">
    <location>
        <begin position="1042"/>
        <end position="1044"/>
    </location>
</feature>
<feature type="helix" evidence="16">
    <location>
        <begin position="1046"/>
        <end position="1058"/>
    </location>
</feature>
<feature type="strand" evidence="16">
    <location>
        <begin position="1059"/>
        <end position="1061"/>
    </location>
</feature>
<feature type="strand" evidence="16">
    <location>
        <begin position="1063"/>
        <end position="1068"/>
    </location>
</feature>
<feature type="helix" evidence="16">
    <location>
        <begin position="1072"/>
        <end position="1074"/>
    </location>
</feature>
<feature type="strand" evidence="17">
    <location>
        <begin position="1076"/>
        <end position="1078"/>
    </location>
</feature>
<feature type="helix" evidence="16">
    <location>
        <begin position="1080"/>
        <end position="1082"/>
    </location>
</feature>
<feature type="helix" evidence="16">
    <location>
        <begin position="1083"/>
        <end position="1092"/>
    </location>
</feature>
<feature type="strand" evidence="15">
    <location>
        <begin position="1094"/>
        <end position="1096"/>
    </location>
</feature>
<feature type="strand" evidence="16">
    <location>
        <begin position="1099"/>
        <end position="1101"/>
    </location>
</feature>
<feature type="helix" evidence="16">
    <location>
        <begin position="1103"/>
        <end position="1107"/>
    </location>
</feature>
<feature type="strand" evidence="16">
    <location>
        <begin position="1112"/>
        <end position="1115"/>
    </location>
</feature>
<feature type="helix" evidence="16">
    <location>
        <begin position="1124"/>
        <end position="1129"/>
    </location>
</feature>
<feature type="helix" evidence="16">
    <location>
        <begin position="1132"/>
        <end position="1140"/>
    </location>
</feature>
<feature type="helix" evidence="16">
    <location>
        <begin position="1142"/>
        <end position="1168"/>
    </location>
</feature>
<feature type="turn" evidence="16">
    <location>
        <begin position="1188"/>
        <end position="1191"/>
    </location>
</feature>
<feature type="turn" evidence="16">
    <location>
        <begin position="1201"/>
        <end position="1203"/>
    </location>
</feature>
<feature type="strand" evidence="16">
    <location>
        <begin position="1215"/>
        <end position="1217"/>
    </location>
</feature>
<feature type="helix" evidence="16">
    <location>
        <begin position="1220"/>
        <end position="1229"/>
    </location>
</feature>
<proteinExistence type="evidence at protein level"/>
<sequence>MGKKMMTTDGNTATAHVAYAMSEVAAIYPITPSSTMGEEADDWAAQGRKNIFGQTLTIREMQSEAGAAGAVHGALAAGALTTTFTASQGLLLMIPNMYKISGELLPGVFHVTARAIAAHALSIFGDHQDIYAARQTGFAMLASSSVQEAHDMALVAHLAAIESNVPFMHFFDGFRTSHEIQKIEVLDYADMASLVNQKALAEFRAKSMNPEHPHVRGTAQNPDIYFQGREAANPYYLKVPGIVAEYMQKVASLTGRSYKLFDYVGAPDAERVIVSMGSSCETIEEVINHLAAKGEKIGLIKVRLYRPFVSEAFFAALPASAKVITVLDRTKEPGAPGDPLYLDVCSAFVERGEAMPKILAGRYGLGSKEFSPAMVKSVYDNMSGAKKNHFTVGIEDDVTGTSLPVDNAFADTTPKGTIQCQFWGLGADGTVGANKQAIKIIGDNTDLFAQGYFSYDSKKSGGITISHLRFGEKPIQSTYLVNRADYVACHNPAYVGIYDILEGIKDGGTFVLNSPWSSLEDMDKHLPSGIKRTIANKKLKFYNIDAVKIATDVGLGGRINMIMQTAFFKLAGVLPFEKAVDLLKKSIHKAYGKKGEKIVKMNTDAVDQAVTSLQEFKYPDSWKDAPAETKAEPMTNEFFKNVVKPILTQQGDKLPVSAFEADGRFPLGTSQFEKRGVAINVPQWVPENCIQCNQCAFVCPHSAILPVLAKEEELVGAPANFTALEAKGKELKGYKFRIQINTLDCMGCGNCADICPPKEKALVMQPLDTQRDAQVPNLEYAARIPVKSEVLPRDSLKGSQFQEPLMEFSGACSGCGETPYVRVITQLFGERMFIANATGCSSIWGASAPSMPYKTNRLGQGPAWGNSLFEDAAEYGFGMNMSMFARRTHLADLAAKALESDASGDVKEALQGWLAGKNDPIKSKEYGDKLKKLLAGQKDGLLGQIAAMSDLYTKKSVWIFGGDGWAYDIGYGGLDHVLASGEDVNVFVMDTEVYSNTGGQSSKATPTGAVAKFAAAGKRTGKKDLARMVMTYGYVYVATVSMGYSKQQFLKVLKEAESFPGPSLVIAYATCINQGLRKGMGKSQDVMNTAVKSGYWPLFRYDPRLAAQGKNPFQLDSKAPDGSVEEFLMAQNRFAVLDRSFPEDAKRLRAQVAHELDVRFKELEHMAATNIFESFAPAGGKADGSVDFGEGAEFCTRDDTPMMARPDSGEACDQNRAGTSEQQGDLSKRTKK</sequence>
<organism evidence="11">
    <name type="scientific">Desulfocurvibacter africanus</name>
    <name type="common">Desulfovibrio africanus</name>
    <dbReference type="NCBI Taxonomy" id="873"/>
    <lineage>
        <taxon>Bacteria</taxon>
        <taxon>Pseudomonadati</taxon>
        <taxon>Thermodesulfobacteriota</taxon>
        <taxon>Desulfovibrionia</taxon>
        <taxon>Desulfovibrionales</taxon>
        <taxon>Desulfovibrionaceae</taxon>
        <taxon>Desulfocurvibacter</taxon>
    </lineage>
</organism>
<reference key="1">
    <citation type="journal article" date="1997" name="J. Bacteriol.">
        <title>Isolation and analysis of the gene encoding the pyruvate-ferredoxin oxidoreductase of Desulfovibrio africanus, production of the recombinant enzyme in Escherichia coli, and effect of carboxy-terminal deletions on its stability.</title>
        <authorList>
            <person name="Pieulle L."/>
            <person name="Magro V."/>
            <person name="Hatchikian E.C."/>
        </authorList>
    </citation>
    <scope>NUCLEOTIDE SEQUENCE [GENOMIC DNA]</scope>
    <scope>PROTEIN SEQUENCE OF 1-18; 304-313; 484-504 AND 1198-1216</scope>
    <scope>FUNCTION</scope>
    <source>
        <strain>ATCC 19996 / DSM 2603 / NCIMB 8401 / Benghazi</strain>
    </source>
</reference>
<reference key="2">
    <citation type="journal article" date="1995" name="Biochim. Biophys. Acta">
        <title>Isolation and characterization of the pyruvate-ferredoxin oxidoreductase from the sulfate-reducing bacterium Desulfovibrio africanus.</title>
        <authorList>
            <person name="Pieulle L."/>
            <person name="Guigliarelli B."/>
            <person name="Asso M."/>
            <person name="Dole F."/>
            <person name="Bernadac A."/>
            <person name="Hatchikian E.C."/>
        </authorList>
    </citation>
    <scope>FUNCTION</scope>
    <scope>CATALYTIC ACTIVITY</scope>
    <scope>COFACTOR</scope>
    <scope>SUBUNIT</scope>
    <scope>SUBCELLULAR LOCATION</scope>
    <source>
        <strain>ATCC 19996 / DSM 2603 / NCIMB 8401 / Benghazi</strain>
    </source>
</reference>
<reference key="3">
    <citation type="journal article" date="1999" name="Nat. Struct. Biol.">
        <title>Crystal structures of the key anaerobic enzyme pyruvate:ferredoxin oxidoreductase, free and in complex with pyruvate.</title>
        <authorList>
            <person name="Chabriere E."/>
            <person name="Charon M.H."/>
            <person name="Volbeda A."/>
            <person name="Pieulle L."/>
            <person name="Hatchikian E.C."/>
            <person name="Fontecilla-Camps J.C."/>
        </authorList>
    </citation>
    <scope>X-RAY CRYSTALLOGRAPHY (2.31 ANGSTROMS) OF 2-1232 IN COMPLEX WITH IRON-SULFUR(4FE-4S); CALCIUM ION; MAGNESIUM ION; PYRUVATE AND THIAMINEPYROPHOSPHATE</scope>
    <scope>SUBUNIT</scope>
    <scope>DISULFIDE BOND</scope>
</reference>
<reference key="4">
    <citation type="journal article" date="2001" name="Science">
        <title>Crystal structure of the free radical intermediate of pyruvate:ferredoxin oxidoreductase.</title>
        <authorList>
            <person name="Chabriere E."/>
            <person name="Vernede X."/>
            <person name="Guigliarelli B."/>
            <person name="Charon M.H."/>
            <person name="Hatchikian E.C."/>
            <person name="Fontecilla-Camps J.C."/>
        </authorList>
    </citation>
    <scope>X-RAY CRYSTALLOGRAPHY (1.90 ANGSTROMS) OF 2-1232 IN COMPLEX WITH CALCIUM; IRON-SULFUR(4FE-4S); MAGNESIUM AND THIAMINEPYROPHOSPHATE ANALOG</scope>
    <scope>SUBUNIT</scope>
</reference>
<reference key="5">
    <citation type="journal article" date="2006" name="Structure">
        <title>Flexibility of thiamine diphosphate revealed by kinetic crystallographic studies of the reaction of pyruvate-ferredoxin oxidoreductase with pyruvate.</title>
        <authorList>
            <person name="Cavazza C."/>
            <person name="Contreras-Martel C."/>
            <person name="Pieulle L."/>
            <person name="Chabriere E."/>
            <person name="Hatchikian E.C."/>
            <person name="Fontecilla-Camps J.C."/>
        </authorList>
    </citation>
    <scope>X-RAY CRYSTALLOGRAPHY (1.78 ANGSTROMS) OF 2-1232 IN COMPLEX WITH IRON-SULFUR(4FE-4S); CALCIUM ION; MAGNESIUM ION; PYRUVATE AND THIAMINEPYROPHOSPHATE</scope>
    <scope>SUBUNIT</scope>
</reference>